<protein>
    <recommendedName>
        <fullName evidence="1">Peptide chain release factor 1</fullName>
        <shortName evidence="1">RF-1</shortName>
    </recommendedName>
</protein>
<dbReference type="EMBL" id="CP000932">
    <property type="protein sequence ID" value="ACM63383.1"/>
    <property type="molecule type" value="Genomic_DNA"/>
</dbReference>
<dbReference type="RefSeq" id="WP_012660769.1">
    <property type="nucleotide sequence ID" value="NC_012039.1"/>
</dbReference>
<dbReference type="SMR" id="B9KE98"/>
<dbReference type="STRING" id="306263.Cla_0015"/>
<dbReference type="KEGG" id="cla:CLA_0015"/>
<dbReference type="PATRIC" id="fig|306263.5.peg.15"/>
<dbReference type="eggNOG" id="COG0216">
    <property type="taxonomic scope" value="Bacteria"/>
</dbReference>
<dbReference type="HOGENOM" id="CLU_036856_0_1_7"/>
<dbReference type="Proteomes" id="UP000007727">
    <property type="component" value="Chromosome"/>
</dbReference>
<dbReference type="GO" id="GO:0005737">
    <property type="term" value="C:cytoplasm"/>
    <property type="evidence" value="ECO:0007669"/>
    <property type="project" value="UniProtKB-SubCell"/>
</dbReference>
<dbReference type="GO" id="GO:0016149">
    <property type="term" value="F:translation release factor activity, codon specific"/>
    <property type="evidence" value="ECO:0007669"/>
    <property type="project" value="UniProtKB-UniRule"/>
</dbReference>
<dbReference type="FunFam" id="3.30.160.20:FF:000004">
    <property type="entry name" value="Peptide chain release factor 1"/>
    <property type="match status" value="1"/>
</dbReference>
<dbReference type="FunFam" id="3.30.70.1660:FF:000002">
    <property type="entry name" value="Peptide chain release factor 1"/>
    <property type="match status" value="1"/>
</dbReference>
<dbReference type="FunFam" id="3.30.70.1660:FF:000004">
    <property type="entry name" value="Peptide chain release factor 1"/>
    <property type="match status" value="1"/>
</dbReference>
<dbReference type="Gene3D" id="3.30.160.20">
    <property type="match status" value="1"/>
</dbReference>
<dbReference type="Gene3D" id="3.30.70.1660">
    <property type="match status" value="1"/>
</dbReference>
<dbReference type="Gene3D" id="6.10.140.1950">
    <property type="match status" value="1"/>
</dbReference>
<dbReference type="HAMAP" id="MF_00093">
    <property type="entry name" value="Rel_fac_1"/>
    <property type="match status" value="1"/>
</dbReference>
<dbReference type="InterPro" id="IPR005139">
    <property type="entry name" value="PCRF"/>
</dbReference>
<dbReference type="InterPro" id="IPR000352">
    <property type="entry name" value="Pep_chain_release_fac_I"/>
</dbReference>
<dbReference type="InterPro" id="IPR045853">
    <property type="entry name" value="Pep_chain_release_fac_I_sf"/>
</dbReference>
<dbReference type="InterPro" id="IPR050057">
    <property type="entry name" value="Prokaryotic/Mito_RF"/>
</dbReference>
<dbReference type="InterPro" id="IPR004373">
    <property type="entry name" value="RF-1"/>
</dbReference>
<dbReference type="NCBIfam" id="TIGR00019">
    <property type="entry name" value="prfA"/>
    <property type="match status" value="1"/>
</dbReference>
<dbReference type="NCBIfam" id="NF001859">
    <property type="entry name" value="PRK00591.1"/>
    <property type="match status" value="1"/>
</dbReference>
<dbReference type="PANTHER" id="PTHR43804">
    <property type="entry name" value="LD18447P"/>
    <property type="match status" value="1"/>
</dbReference>
<dbReference type="PANTHER" id="PTHR43804:SF7">
    <property type="entry name" value="LD18447P"/>
    <property type="match status" value="1"/>
</dbReference>
<dbReference type="Pfam" id="PF03462">
    <property type="entry name" value="PCRF"/>
    <property type="match status" value="1"/>
</dbReference>
<dbReference type="Pfam" id="PF00472">
    <property type="entry name" value="RF-1"/>
    <property type="match status" value="1"/>
</dbReference>
<dbReference type="SMART" id="SM00937">
    <property type="entry name" value="PCRF"/>
    <property type="match status" value="1"/>
</dbReference>
<dbReference type="SUPFAM" id="SSF75620">
    <property type="entry name" value="Release factor"/>
    <property type="match status" value="1"/>
</dbReference>
<dbReference type="PROSITE" id="PS00745">
    <property type="entry name" value="RF_PROK_I"/>
    <property type="match status" value="1"/>
</dbReference>
<gene>
    <name evidence="1" type="primary">prfA</name>
    <name type="ordered locus">Cla_0015</name>
</gene>
<feature type="chain" id="PRO_1000193478" description="Peptide chain release factor 1">
    <location>
        <begin position="1"/>
        <end position="355"/>
    </location>
</feature>
<feature type="region of interest" description="Disordered" evidence="2">
    <location>
        <begin position="283"/>
        <end position="303"/>
    </location>
</feature>
<feature type="modified residue" description="N5-methylglutamine" evidence="1">
    <location>
        <position position="231"/>
    </location>
</feature>
<accession>B9KE98</accession>
<evidence type="ECO:0000255" key="1">
    <source>
        <dbReference type="HAMAP-Rule" id="MF_00093"/>
    </source>
</evidence>
<evidence type="ECO:0000256" key="2">
    <source>
        <dbReference type="SAM" id="MobiDB-lite"/>
    </source>
</evidence>
<comment type="function">
    <text evidence="1">Peptide chain release factor 1 directs the termination of translation in response to the peptide chain termination codons UAG and UAA.</text>
</comment>
<comment type="subcellular location">
    <subcellularLocation>
        <location evidence="1">Cytoplasm</location>
    </subcellularLocation>
</comment>
<comment type="PTM">
    <text evidence="1">Methylated by PrmC. Methylation increases the termination efficiency of RF1.</text>
</comment>
<comment type="similarity">
    <text evidence="1">Belongs to the prokaryotic/mitochondrial release factor family.</text>
</comment>
<reference key="1">
    <citation type="journal article" date="2008" name="Foodborne Pathog. Dis.">
        <title>The complete genome sequence and analysis of the human pathogen Campylobacter lari.</title>
        <authorList>
            <person name="Miller W.G."/>
            <person name="Wang G."/>
            <person name="Binnewies T.T."/>
            <person name="Parker C.T."/>
        </authorList>
    </citation>
    <scope>NUCLEOTIDE SEQUENCE [LARGE SCALE GENOMIC DNA]</scope>
    <source>
        <strain>RM2100 / D67 / ATCC BAA-1060</strain>
    </source>
</reference>
<proteinExistence type="inferred from homology"/>
<keyword id="KW-0963">Cytoplasm</keyword>
<keyword id="KW-0488">Methylation</keyword>
<keyword id="KW-0648">Protein biosynthesis</keyword>
<keyword id="KW-1185">Reference proteome</keyword>
<sequence>MLADKLKPFLTRFDELNTLLSDVNISNDISKMTALSKEQKNLEPIVEKAKEYLKTLDDIEENKLLLSDPELGELAKEELKNLELLKPNLEEELKILLLPKDPNDDKNIFLEIRAGTGGDEASLFVGDLVKAYIRYAENRDYKYEIVSSSEGSVGGFKEIIILIKGNGAYSRLKYEGGTHRVQRVPETESQGRVHTSAITVAIMPEVDDVEIQINPNDLKIDVMRSSGHGGQSVNTTDSAVRITHIPTGIVVVNQDGKSQHKNKESAMKVLKARLFEMQEQERLAKESEARKSQVGSGDRSERIRTYNFPQNRISDHRINLTLYRLDAILEGGLFDEIVEPLIAYYQAEALKQENL</sequence>
<name>RF1_CAMLR</name>
<organism>
    <name type="scientific">Campylobacter lari (strain RM2100 / D67 / ATCC BAA-1060)</name>
    <dbReference type="NCBI Taxonomy" id="306263"/>
    <lineage>
        <taxon>Bacteria</taxon>
        <taxon>Pseudomonadati</taxon>
        <taxon>Campylobacterota</taxon>
        <taxon>Epsilonproteobacteria</taxon>
        <taxon>Campylobacterales</taxon>
        <taxon>Campylobacteraceae</taxon>
        <taxon>Campylobacter</taxon>
    </lineage>
</organism>